<evidence type="ECO:0000255" key="1">
    <source>
        <dbReference type="HAMAP-Rule" id="MF_00125"/>
    </source>
</evidence>
<name>HISZ_SYNPW</name>
<organism>
    <name type="scientific">Synechococcus sp. (strain WH7803)</name>
    <dbReference type="NCBI Taxonomy" id="32051"/>
    <lineage>
        <taxon>Bacteria</taxon>
        <taxon>Bacillati</taxon>
        <taxon>Cyanobacteriota</taxon>
        <taxon>Cyanophyceae</taxon>
        <taxon>Synechococcales</taxon>
        <taxon>Synechococcaceae</taxon>
        <taxon>Synechococcus</taxon>
    </lineage>
</organism>
<gene>
    <name evidence="1" type="primary">hisZ</name>
    <name type="ordered locus">SynWH7803_1240</name>
</gene>
<proteinExistence type="inferred from homology"/>
<comment type="function">
    <text evidence="1">Required for the first step of histidine biosynthesis. May allow the feedback regulation of ATP phosphoribosyltransferase activity by histidine.</text>
</comment>
<comment type="pathway">
    <text evidence="1">Amino-acid biosynthesis; L-histidine biosynthesis; L-histidine from 5-phospho-alpha-D-ribose 1-diphosphate: step 1/9.</text>
</comment>
<comment type="subunit">
    <text evidence="1">Heteromultimer composed of HisG and HisZ subunits.</text>
</comment>
<comment type="subcellular location">
    <subcellularLocation>
        <location evidence="1">Cytoplasm</location>
    </subcellularLocation>
</comment>
<comment type="miscellaneous">
    <text>This function is generally fulfilled by the C-terminal part of HisG, which is missing in some bacteria such as this one.</text>
</comment>
<comment type="similarity">
    <text evidence="1">Belongs to the class-II aminoacyl-tRNA synthetase family. HisZ subfamily.</text>
</comment>
<protein>
    <recommendedName>
        <fullName evidence="1">ATP phosphoribosyltransferase regulatory subunit</fullName>
    </recommendedName>
</protein>
<feature type="chain" id="PRO_1000016289" description="ATP phosphoribosyltransferase regulatory subunit">
    <location>
        <begin position="1"/>
        <end position="392"/>
    </location>
</feature>
<accession>A5GL51</accession>
<dbReference type="EMBL" id="CT971583">
    <property type="protein sequence ID" value="CAK23666.1"/>
    <property type="molecule type" value="Genomic_DNA"/>
</dbReference>
<dbReference type="SMR" id="A5GL51"/>
<dbReference type="STRING" id="32051.SynWH7803_1240"/>
<dbReference type="KEGG" id="syx:SynWH7803_1240"/>
<dbReference type="eggNOG" id="COG3705">
    <property type="taxonomic scope" value="Bacteria"/>
</dbReference>
<dbReference type="HOGENOM" id="CLU_025113_0_2_3"/>
<dbReference type="OrthoDB" id="9800814at2"/>
<dbReference type="UniPathway" id="UPA00031">
    <property type="reaction ID" value="UER00006"/>
</dbReference>
<dbReference type="Proteomes" id="UP000001566">
    <property type="component" value="Chromosome"/>
</dbReference>
<dbReference type="GO" id="GO:0005737">
    <property type="term" value="C:cytoplasm"/>
    <property type="evidence" value="ECO:0007669"/>
    <property type="project" value="UniProtKB-SubCell"/>
</dbReference>
<dbReference type="GO" id="GO:0004821">
    <property type="term" value="F:histidine-tRNA ligase activity"/>
    <property type="evidence" value="ECO:0007669"/>
    <property type="project" value="TreeGrafter"/>
</dbReference>
<dbReference type="GO" id="GO:0006427">
    <property type="term" value="P:histidyl-tRNA aminoacylation"/>
    <property type="evidence" value="ECO:0007669"/>
    <property type="project" value="TreeGrafter"/>
</dbReference>
<dbReference type="GO" id="GO:0000105">
    <property type="term" value="P:L-histidine biosynthetic process"/>
    <property type="evidence" value="ECO:0007669"/>
    <property type="project" value="UniProtKB-UniRule"/>
</dbReference>
<dbReference type="Gene3D" id="3.30.930.10">
    <property type="entry name" value="Bira Bifunctional Protein, Domain 2"/>
    <property type="match status" value="1"/>
</dbReference>
<dbReference type="HAMAP" id="MF_00125">
    <property type="entry name" value="HisZ"/>
    <property type="match status" value="1"/>
</dbReference>
<dbReference type="InterPro" id="IPR045864">
    <property type="entry name" value="aa-tRNA-synth_II/BPL/LPL"/>
</dbReference>
<dbReference type="InterPro" id="IPR041715">
    <property type="entry name" value="HisRS-like_core"/>
</dbReference>
<dbReference type="InterPro" id="IPR004516">
    <property type="entry name" value="HisRS/HisZ"/>
</dbReference>
<dbReference type="InterPro" id="IPR004517">
    <property type="entry name" value="HisZ"/>
</dbReference>
<dbReference type="NCBIfam" id="NF008939">
    <property type="entry name" value="PRK12292.2-1"/>
    <property type="match status" value="1"/>
</dbReference>
<dbReference type="PANTHER" id="PTHR43707:SF1">
    <property type="entry name" value="HISTIDINE--TRNA LIGASE, MITOCHONDRIAL-RELATED"/>
    <property type="match status" value="1"/>
</dbReference>
<dbReference type="PANTHER" id="PTHR43707">
    <property type="entry name" value="HISTIDYL-TRNA SYNTHETASE"/>
    <property type="match status" value="1"/>
</dbReference>
<dbReference type="Pfam" id="PF13393">
    <property type="entry name" value="tRNA-synt_His"/>
    <property type="match status" value="1"/>
</dbReference>
<dbReference type="PIRSF" id="PIRSF001549">
    <property type="entry name" value="His-tRNA_synth"/>
    <property type="match status" value="1"/>
</dbReference>
<dbReference type="SUPFAM" id="SSF55681">
    <property type="entry name" value="Class II aaRS and biotin synthetases"/>
    <property type="match status" value="1"/>
</dbReference>
<reference key="1">
    <citation type="submission" date="2006-05" db="EMBL/GenBank/DDBJ databases">
        <authorList>
            <consortium name="Genoscope"/>
        </authorList>
    </citation>
    <scope>NUCLEOTIDE SEQUENCE [LARGE SCALE GENOMIC DNA]</scope>
    <source>
        <strain>WH7803</strain>
    </source>
</reference>
<keyword id="KW-0028">Amino-acid biosynthesis</keyword>
<keyword id="KW-0963">Cytoplasm</keyword>
<keyword id="KW-0368">Histidine biosynthesis</keyword>
<keyword id="KW-1185">Reference proteome</keyword>
<sequence length="392" mass="43509">MALQPASGVRDLNPQQVQRNHELREALAAVYRLWGYEEVAPPRIERMDTLKAGGAIDSRDIVRLVADEPLGLRPEMTASIARAACTRFQNRRRPLRLWSHGTVFEGRQADEGGLCIEEKLHCGVELFGARGVEAELELLSLLMASFKALALPLSEPPQLLIGHTGLMQLLLKNVDEQDHPAYRNCLTQLDRLALRELINTQPQHAHLQQWLDRRGAPDAVISQLKDAFPDAPVLQQLTRLINHLSPLAETTGISLQLDPTFQPMYALYDGIVFQLVCRGTSSPVVVARGGRYDTVVQRLGARGKDATGLGFSFCVDDLRDLPGAFAMTTSRTDRILLCYSQNSSMEQALQAQAGLHRRGLSCQVDHHPCETKAEAEERLREAGCNSLEWVGD</sequence>